<gene>
    <name type="primary">COA3</name>
    <name type="ordered locus">ZYRO0G20790g</name>
</gene>
<name>COA3_ZYGRC</name>
<proteinExistence type="inferred from homology"/>
<accession>C5E1G5</accession>
<evidence type="ECO:0000250" key="1"/>
<evidence type="ECO:0000255" key="2"/>
<evidence type="ECO:0000305" key="3"/>
<organism>
    <name type="scientific">Zygosaccharomyces rouxii (strain ATCC 2623 / CBS 732 / NBRC 1130 / NCYC 568 / NRRL Y-229)</name>
    <dbReference type="NCBI Taxonomy" id="559307"/>
    <lineage>
        <taxon>Eukaryota</taxon>
        <taxon>Fungi</taxon>
        <taxon>Dikarya</taxon>
        <taxon>Ascomycota</taxon>
        <taxon>Saccharomycotina</taxon>
        <taxon>Saccharomycetes</taxon>
        <taxon>Saccharomycetales</taxon>
        <taxon>Saccharomycetaceae</taxon>
        <taxon>Zygosaccharomyces</taxon>
    </lineage>
</organism>
<sequence>MVLDPSRYQDHRTWKMTPGLIRARQPFFKKNMIGLAILAGVSAGIYTYTYSFLHKDNDFADVPIPPIDEKELEKLKKEYEQHKQERQ</sequence>
<feature type="chain" id="PRO_0000405453" description="Cytochrome c oxidase assembly factor 3, mitochondrial">
    <location>
        <begin position="1"/>
        <end position="87"/>
    </location>
</feature>
<feature type="topological domain" description="Mitochondrial matrix" evidence="1">
    <location>
        <begin position="1"/>
        <end position="30"/>
    </location>
</feature>
<feature type="transmembrane region" description="Helical" evidence="2">
    <location>
        <begin position="31"/>
        <end position="53"/>
    </location>
</feature>
<feature type="topological domain" description="Mitochondrial intermembrane" evidence="1">
    <location>
        <begin position="54"/>
        <end position="87"/>
    </location>
</feature>
<comment type="function">
    <text evidence="1">Required for assembly of cytochrome c oxidase (complex IV).</text>
</comment>
<comment type="subunit">
    <text evidence="1">Component of 250-400 kDa complexes called cytochrome oxidase assembly intermediates or COA complexes.</text>
</comment>
<comment type="subcellular location">
    <subcellularLocation>
        <location>Mitochondrion inner membrane</location>
        <topology>Single-pass membrane protein</topology>
    </subcellularLocation>
</comment>
<comment type="similarity">
    <text evidence="3">Belongs to the COA3 family.</text>
</comment>
<keyword id="KW-0472">Membrane</keyword>
<keyword id="KW-0496">Mitochondrion</keyword>
<keyword id="KW-0999">Mitochondrion inner membrane</keyword>
<keyword id="KW-1185">Reference proteome</keyword>
<keyword id="KW-0812">Transmembrane</keyword>
<keyword id="KW-1133">Transmembrane helix</keyword>
<reference key="1">
    <citation type="journal article" date="2009" name="Genome Res.">
        <title>Comparative genomics of protoploid Saccharomycetaceae.</title>
        <authorList>
            <consortium name="The Genolevures Consortium"/>
            <person name="Souciet J.-L."/>
            <person name="Dujon B."/>
            <person name="Gaillardin C."/>
            <person name="Johnston M."/>
            <person name="Baret P.V."/>
            <person name="Cliften P."/>
            <person name="Sherman D.J."/>
            <person name="Weissenbach J."/>
            <person name="Westhof E."/>
            <person name="Wincker P."/>
            <person name="Jubin C."/>
            <person name="Poulain J."/>
            <person name="Barbe V."/>
            <person name="Segurens B."/>
            <person name="Artiguenave F."/>
            <person name="Anthouard V."/>
            <person name="Vacherie B."/>
            <person name="Val M.-E."/>
            <person name="Fulton R.S."/>
            <person name="Minx P."/>
            <person name="Wilson R."/>
            <person name="Durrens P."/>
            <person name="Jean G."/>
            <person name="Marck C."/>
            <person name="Martin T."/>
            <person name="Nikolski M."/>
            <person name="Rolland T."/>
            <person name="Seret M.-L."/>
            <person name="Casaregola S."/>
            <person name="Despons L."/>
            <person name="Fairhead C."/>
            <person name="Fischer G."/>
            <person name="Lafontaine I."/>
            <person name="Leh V."/>
            <person name="Lemaire M."/>
            <person name="de Montigny J."/>
            <person name="Neuveglise C."/>
            <person name="Thierry A."/>
            <person name="Blanc-Lenfle I."/>
            <person name="Bleykasten C."/>
            <person name="Diffels J."/>
            <person name="Fritsch E."/>
            <person name="Frangeul L."/>
            <person name="Goeffon A."/>
            <person name="Jauniaux N."/>
            <person name="Kachouri-Lafond R."/>
            <person name="Payen C."/>
            <person name="Potier S."/>
            <person name="Pribylova L."/>
            <person name="Ozanne C."/>
            <person name="Richard G.-F."/>
            <person name="Sacerdot C."/>
            <person name="Straub M.-L."/>
            <person name="Talla E."/>
        </authorList>
    </citation>
    <scope>NUCLEOTIDE SEQUENCE [LARGE SCALE GENOMIC DNA]</scope>
    <source>
        <strain>ATCC 2623 / CBS 732 / BCRC 21506 / NBRC 1130 / NCYC 568 / NRRL Y-229</strain>
    </source>
</reference>
<dbReference type="EMBL" id="CU928179">
    <property type="protein sequence ID" value="CAR29949.1"/>
    <property type="molecule type" value="Genomic_DNA"/>
</dbReference>
<dbReference type="RefSeq" id="XP_002498882.1">
    <property type="nucleotide sequence ID" value="XM_002498837.1"/>
</dbReference>
<dbReference type="FunCoup" id="C5E1G5">
    <property type="interactions" value="33"/>
</dbReference>
<dbReference type="STRING" id="559307.C5E1G5"/>
<dbReference type="GeneID" id="8206716"/>
<dbReference type="KEGG" id="zro:ZYRO0G20790g"/>
<dbReference type="HOGENOM" id="CLU_153999_0_0_1"/>
<dbReference type="InParanoid" id="C5E1G5"/>
<dbReference type="Proteomes" id="UP000008536">
    <property type="component" value="Chromosome G"/>
</dbReference>
<dbReference type="GO" id="GO:0005743">
    <property type="term" value="C:mitochondrial inner membrane"/>
    <property type="evidence" value="ECO:0007669"/>
    <property type="project" value="UniProtKB-SubCell"/>
</dbReference>
<dbReference type="GO" id="GO:0033617">
    <property type="term" value="P:mitochondrial cytochrome c oxidase assembly"/>
    <property type="evidence" value="ECO:0007669"/>
    <property type="project" value="InterPro"/>
</dbReference>
<dbReference type="InterPro" id="IPR041752">
    <property type="entry name" value="Coa3"/>
</dbReference>
<dbReference type="InterPro" id="IPR018628">
    <property type="entry name" value="Coa3_cc"/>
</dbReference>
<dbReference type="PANTHER" id="PTHR15642:SF3">
    <property type="entry name" value="CYTOCHROME C OXIDASE ASSEMBLY FACTOR 3 HOMOLOG, MITOCHONDRIAL"/>
    <property type="match status" value="1"/>
</dbReference>
<dbReference type="PANTHER" id="PTHR15642">
    <property type="entry name" value="CYTOCHROME C OXIDASE ASSEMBLY FACTOR 3, MITOCHONDRIAL"/>
    <property type="match status" value="1"/>
</dbReference>
<dbReference type="Pfam" id="PF09813">
    <property type="entry name" value="Coa3_cc"/>
    <property type="match status" value="1"/>
</dbReference>
<protein>
    <recommendedName>
        <fullName>Cytochrome c oxidase assembly factor 3, mitochondrial</fullName>
    </recommendedName>
</protein>